<evidence type="ECO:0000250" key="1">
    <source>
        <dbReference type="UniProtKB" id="Q641Z8"/>
    </source>
</evidence>
<evidence type="ECO:0000250" key="2">
    <source>
        <dbReference type="UniProtKB" id="Q9UBV8"/>
    </source>
</evidence>
<evidence type="ECO:0000255" key="3">
    <source>
        <dbReference type="PROSITE-ProRule" id="PRU00448"/>
    </source>
</evidence>
<evidence type="ECO:0000256" key="4">
    <source>
        <dbReference type="SAM" id="MobiDB-lite"/>
    </source>
</evidence>
<evidence type="ECO:0000305" key="5"/>
<keyword id="KW-0106">Calcium</keyword>
<keyword id="KW-0963">Cytoplasm</keyword>
<keyword id="KW-0968">Cytoplasmic vesicle</keyword>
<keyword id="KW-0256">Endoplasmic reticulum</keyword>
<keyword id="KW-0472">Membrane</keyword>
<keyword id="KW-0479">Metal-binding</keyword>
<keyword id="KW-1185">Reference proteome</keyword>
<keyword id="KW-0677">Repeat</keyword>
<gene>
    <name evidence="2" type="primary">pef1</name>
</gene>
<comment type="function">
    <text evidence="1 2">Calcium-binding protein that acts as an adapter that bridges unrelated proteins or stabilizes weak protein-protein complexes in response to calcium. Acts as a negative regulator of ER-Golgi transport (By similarity).</text>
</comment>
<comment type="subunit">
    <text evidence="2">Heterodimer; heterodimerizes (via the EF-hand 5) with pdcd6.</text>
</comment>
<comment type="interaction">
    <interactant intactId="EBI-8160818">
        <id>Q5PQ53</id>
    </interactant>
    <interactant intactId="EBI-8160800">
        <id>Q4A520</id>
        <label>XB5813854.L</label>
    </interactant>
    <organismsDiffer>false</organismsDiffer>
    <experiments>8</experiments>
</comment>
<comment type="subcellular location">
    <subcellularLocation>
        <location evidence="2">Cytoplasm</location>
    </subcellularLocation>
    <subcellularLocation>
        <location evidence="1">Endoplasmic reticulum</location>
    </subcellularLocation>
    <subcellularLocation>
        <location evidence="2">Membrane</location>
        <topology evidence="2">Peripheral membrane protein</topology>
    </subcellularLocation>
    <subcellularLocation>
        <location evidence="2">Cytoplasmic vesicle</location>
        <location evidence="2">COPII-coated vesicle membrane</location>
        <topology evidence="2">Peripheral membrane protein</topology>
    </subcellularLocation>
</comment>
<dbReference type="EMBL" id="BC087356">
    <property type="protein sequence ID" value="AAH87356.1"/>
    <property type="molecule type" value="mRNA"/>
</dbReference>
<dbReference type="RefSeq" id="NP_001088714.1">
    <property type="nucleotide sequence ID" value="NM_001095245.1"/>
</dbReference>
<dbReference type="SMR" id="Q5PQ53"/>
<dbReference type="IntAct" id="Q5PQ53">
    <property type="interactions" value="1"/>
</dbReference>
<dbReference type="MINT" id="Q5PQ53"/>
<dbReference type="DNASU" id="495978"/>
<dbReference type="GeneID" id="495978"/>
<dbReference type="KEGG" id="xla:495978"/>
<dbReference type="AGR" id="Xenbase:XB-GENE-1013241"/>
<dbReference type="CTD" id="495978"/>
<dbReference type="Xenbase" id="XB-GENE-1013241">
    <property type="gene designation" value="pef1.L"/>
</dbReference>
<dbReference type="OMA" id="YNKSYNP"/>
<dbReference type="OrthoDB" id="10248537at2759"/>
<dbReference type="Proteomes" id="UP000186698">
    <property type="component" value="Chromosome 2L"/>
</dbReference>
<dbReference type="Bgee" id="495978">
    <property type="expression patterns" value="Expressed in internal ear and 19 other cell types or tissues"/>
</dbReference>
<dbReference type="GO" id="GO:0030127">
    <property type="term" value="C:COPII vesicle coat"/>
    <property type="evidence" value="ECO:0000250"/>
    <property type="project" value="UniProtKB"/>
</dbReference>
<dbReference type="GO" id="GO:0031463">
    <property type="term" value="C:Cul3-RING ubiquitin ligase complex"/>
    <property type="evidence" value="ECO:0000250"/>
    <property type="project" value="UniProtKB"/>
</dbReference>
<dbReference type="GO" id="GO:0005783">
    <property type="term" value="C:endoplasmic reticulum"/>
    <property type="evidence" value="ECO:0007669"/>
    <property type="project" value="UniProtKB-SubCell"/>
</dbReference>
<dbReference type="GO" id="GO:0005509">
    <property type="term" value="F:calcium ion binding"/>
    <property type="evidence" value="ECO:0007669"/>
    <property type="project" value="InterPro"/>
</dbReference>
<dbReference type="GO" id="GO:0048306">
    <property type="term" value="F:calcium-dependent protein binding"/>
    <property type="evidence" value="ECO:0007669"/>
    <property type="project" value="UniProtKB-ARBA"/>
</dbReference>
<dbReference type="GO" id="GO:1990756">
    <property type="term" value="F:ubiquitin-like ligase-substrate adaptor activity"/>
    <property type="evidence" value="ECO:0000250"/>
    <property type="project" value="UniProtKB"/>
</dbReference>
<dbReference type="GO" id="GO:0048208">
    <property type="term" value="P:COPII vesicle coating"/>
    <property type="evidence" value="ECO:0000250"/>
    <property type="project" value="UniProtKB"/>
</dbReference>
<dbReference type="GO" id="GO:0006888">
    <property type="term" value="P:endoplasmic reticulum to Golgi vesicle-mediated transport"/>
    <property type="evidence" value="ECO:0000250"/>
    <property type="project" value="UniProtKB"/>
</dbReference>
<dbReference type="GO" id="GO:0014032">
    <property type="term" value="P:neural crest cell development"/>
    <property type="evidence" value="ECO:0000250"/>
    <property type="project" value="UniProtKB"/>
</dbReference>
<dbReference type="GO" id="GO:0014029">
    <property type="term" value="P:neural crest formation"/>
    <property type="evidence" value="ECO:0000250"/>
    <property type="project" value="UniProtKB"/>
</dbReference>
<dbReference type="GO" id="GO:1902527">
    <property type="term" value="P:positive regulation of protein monoubiquitination"/>
    <property type="evidence" value="ECO:0000250"/>
    <property type="project" value="UniProtKB"/>
</dbReference>
<dbReference type="CDD" id="cd16184">
    <property type="entry name" value="EFh_PEF_peflin"/>
    <property type="match status" value="1"/>
</dbReference>
<dbReference type="FunFam" id="1.10.238.10:FF:000139">
    <property type="entry name" value="Peflin isoform 1"/>
    <property type="match status" value="1"/>
</dbReference>
<dbReference type="Gene3D" id="1.10.238.10">
    <property type="entry name" value="EF-hand"/>
    <property type="match status" value="1"/>
</dbReference>
<dbReference type="InterPro" id="IPR011992">
    <property type="entry name" value="EF-hand-dom_pair"/>
</dbReference>
<dbReference type="InterPro" id="IPR018247">
    <property type="entry name" value="EF_Hand_1_Ca_BS"/>
</dbReference>
<dbReference type="InterPro" id="IPR002048">
    <property type="entry name" value="EF_hand_dom"/>
</dbReference>
<dbReference type="InterPro" id="IPR051426">
    <property type="entry name" value="Peflin/Sorcin_CaBP"/>
</dbReference>
<dbReference type="PANTHER" id="PTHR46212">
    <property type="entry name" value="PEFLIN"/>
    <property type="match status" value="1"/>
</dbReference>
<dbReference type="PANTHER" id="PTHR46212:SF10">
    <property type="entry name" value="PEFLIN"/>
    <property type="match status" value="1"/>
</dbReference>
<dbReference type="Pfam" id="PF13405">
    <property type="entry name" value="EF-hand_6"/>
    <property type="match status" value="1"/>
</dbReference>
<dbReference type="Pfam" id="PF13499">
    <property type="entry name" value="EF-hand_7"/>
    <property type="match status" value="1"/>
</dbReference>
<dbReference type="SMART" id="SM00054">
    <property type="entry name" value="EFh"/>
    <property type="match status" value="3"/>
</dbReference>
<dbReference type="SUPFAM" id="SSF47473">
    <property type="entry name" value="EF-hand"/>
    <property type="match status" value="1"/>
</dbReference>
<dbReference type="PROSITE" id="PS00018">
    <property type="entry name" value="EF_HAND_1"/>
    <property type="match status" value="2"/>
</dbReference>
<dbReference type="PROSITE" id="PS50222">
    <property type="entry name" value="EF_HAND_2"/>
    <property type="match status" value="2"/>
</dbReference>
<name>PEF1_XENLA</name>
<organism>
    <name type="scientific">Xenopus laevis</name>
    <name type="common">African clawed frog</name>
    <dbReference type="NCBI Taxonomy" id="8355"/>
    <lineage>
        <taxon>Eukaryota</taxon>
        <taxon>Metazoa</taxon>
        <taxon>Chordata</taxon>
        <taxon>Craniata</taxon>
        <taxon>Vertebrata</taxon>
        <taxon>Euteleostomi</taxon>
        <taxon>Amphibia</taxon>
        <taxon>Batrachia</taxon>
        <taxon>Anura</taxon>
        <taxon>Pipoidea</taxon>
        <taxon>Pipidae</taxon>
        <taxon>Xenopodinae</taxon>
        <taxon>Xenopus</taxon>
        <taxon>Xenopus</taxon>
    </lineage>
</organism>
<reference key="1">
    <citation type="submission" date="2004-12" db="EMBL/GenBank/DDBJ databases">
        <authorList>
            <consortium name="NIH - Xenopus Gene Collection (XGC) project"/>
        </authorList>
    </citation>
    <scope>NUCLEOTIDE SEQUENCE [LARGE SCALE MRNA]</scope>
    <source>
        <tissue>Testis</tissue>
    </source>
</reference>
<feature type="chain" id="PRO_0000247049" description="Peflin">
    <location>
        <begin position="1"/>
        <end position="283"/>
    </location>
</feature>
<feature type="repeat" description="1">
    <location>
        <begin position="21"/>
        <end position="30"/>
    </location>
</feature>
<feature type="repeat" description="2">
    <location>
        <begin position="36"/>
        <end position="44"/>
    </location>
</feature>
<feature type="repeat" description="3">
    <location>
        <begin position="45"/>
        <end position="54"/>
    </location>
</feature>
<feature type="repeat" description="4">
    <location>
        <begin position="55"/>
        <end position="62"/>
    </location>
</feature>
<feature type="repeat" description="5">
    <location>
        <begin position="71"/>
        <end position="79"/>
    </location>
</feature>
<feature type="repeat" description="6">
    <location>
        <begin position="80"/>
        <end position="87"/>
    </location>
</feature>
<feature type="repeat" description="7">
    <location>
        <begin position="88"/>
        <end position="95"/>
    </location>
</feature>
<feature type="repeat" description="8">
    <location>
        <begin position="96"/>
        <end position="104"/>
    </location>
</feature>
<feature type="domain" description="EF-hand 1" evidence="3">
    <location>
        <begin position="113"/>
        <end position="148"/>
    </location>
</feature>
<feature type="domain" description="EF-hand 2" evidence="5">
    <location>
        <begin position="154"/>
        <end position="179"/>
    </location>
</feature>
<feature type="domain" description="EF-hand 3" evidence="3">
    <location>
        <begin position="180"/>
        <end position="215"/>
    </location>
</feature>
<feature type="domain" description="EF-hand 4" evidence="5">
    <location>
        <begin position="216"/>
        <end position="252"/>
    </location>
</feature>
<feature type="domain" description="EF-hand 5" evidence="5">
    <location>
        <begin position="253"/>
        <end position="282"/>
    </location>
</feature>
<feature type="region of interest" description="8 X 9 AA approximate tandem repeat of [AP]-P-G-G-P-Y-G-G-P-P">
    <location>
        <begin position="21"/>
        <end position="104"/>
    </location>
</feature>
<feature type="region of interest" description="Disordered" evidence="4">
    <location>
        <begin position="37"/>
        <end position="113"/>
    </location>
</feature>
<feature type="compositionally biased region" description="Low complexity" evidence="4">
    <location>
        <begin position="37"/>
        <end position="70"/>
    </location>
</feature>
<feature type="compositionally biased region" description="Gly residues" evidence="4">
    <location>
        <begin position="71"/>
        <end position="81"/>
    </location>
</feature>
<feature type="compositionally biased region" description="Low complexity" evidence="4">
    <location>
        <begin position="93"/>
        <end position="104"/>
    </location>
</feature>
<feature type="binding site" evidence="3">
    <location>
        <position position="126"/>
    </location>
    <ligand>
        <name>Ca(2+)</name>
        <dbReference type="ChEBI" id="CHEBI:29108"/>
        <label>1</label>
    </ligand>
</feature>
<feature type="binding site" evidence="3">
    <location>
        <position position="128"/>
    </location>
    <ligand>
        <name>Ca(2+)</name>
        <dbReference type="ChEBI" id="CHEBI:29108"/>
        <label>1</label>
    </ligand>
</feature>
<feature type="binding site" evidence="3">
    <location>
        <position position="130"/>
    </location>
    <ligand>
        <name>Ca(2+)</name>
        <dbReference type="ChEBI" id="CHEBI:29108"/>
        <label>1</label>
    </ligand>
</feature>
<feature type="binding site" evidence="3">
    <location>
        <position position="132"/>
    </location>
    <ligand>
        <name>Ca(2+)</name>
        <dbReference type="ChEBI" id="CHEBI:29108"/>
        <label>1</label>
    </ligand>
</feature>
<feature type="binding site" evidence="3">
    <location>
        <position position="137"/>
    </location>
    <ligand>
        <name>Ca(2+)</name>
        <dbReference type="ChEBI" id="CHEBI:29108"/>
        <label>1</label>
    </ligand>
</feature>
<feature type="binding site" evidence="3">
    <location>
        <position position="193"/>
    </location>
    <ligand>
        <name>Ca(2+)</name>
        <dbReference type="ChEBI" id="CHEBI:29108"/>
        <label>2</label>
    </ligand>
</feature>
<feature type="binding site" evidence="3">
    <location>
        <position position="195"/>
    </location>
    <ligand>
        <name>Ca(2+)</name>
        <dbReference type="ChEBI" id="CHEBI:29108"/>
        <label>2</label>
    </ligand>
</feature>
<feature type="binding site" evidence="3">
    <location>
        <position position="197"/>
    </location>
    <ligand>
        <name>Ca(2+)</name>
        <dbReference type="ChEBI" id="CHEBI:29108"/>
        <label>2</label>
    </ligand>
</feature>
<feature type="binding site" evidence="3">
    <location>
        <position position="199"/>
    </location>
    <ligand>
        <name>Ca(2+)</name>
        <dbReference type="ChEBI" id="CHEBI:29108"/>
        <label>2</label>
    </ligand>
</feature>
<feature type="binding site" evidence="3">
    <location>
        <position position="204"/>
    </location>
    <ligand>
        <name>Ca(2+)</name>
        <dbReference type="ChEBI" id="CHEBI:29108"/>
        <label>2</label>
    </ligand>
</feature>
<protein>
    <recommendedName>
        <fullName evidence="2">Peflin</fullName>
    </recommendedName>
    <alternativeName>
        <fullName evidence="2">PEF protein with a long N-terminal hydrophobic domain</fullName>
    </alternativeName>
    <alternativeName>
        <fullName evidence="2">Penta-EF hand domain-containing protein 1</fullName>
    </alternativeName>
</protein>
<sequence length="283" mass="30533">MASYPYGQGYHGAAGQPPGAPQTNYYGGQQYGGGVQPAASYGRPAPGAPYGSPPSGGVYGHPVPGSAAPGAPGGPYGGQAPGGPYSVPGSTPYGSQQHGSYGQGAPAGNIPPGVDPEAFSWFQTVDTDHSGYISLKELKQALVNTNWSSFNDETCTMMMNMFDKSNSGRIDMFGFSALWRFIQQWRNLFQQYDRDRSGSINQGELHQALCQMGYQLSPQFVQIVMSRYAQRSAQPGLQLDRFIQICTQLQSMTEAFREKDTGQIGTAKLSYEDFITMTTTRLL</sequence>
<proteinExistence type="evidence at protein level"/>
<accession>Q5PQ53</accession>